<feature type="chain" id="PRO_1000078100" description="Dihydroorotase">
    <location>
        <begin position="1"/>
        <end position="348"/>
    </location>
</feature>
<feature type="active site" evidence="1">
    <location>
        <position position="248"/>
    </location>
</feature>
<feature type="binding site" evidence="1">
    <location>
        <position position="14"/>
    </location>
    <ligand>
        <name>Zn(2+)</name>
        <dbReference type="ChEBI" id="CHEBI:29105"/>
        <label>1</label>
    </ligand>
</feature>
<feature type="binding site" evidence="1">
    <location>
        <begin position="16"/>
        <end position="18"/>
    </location>
    <ligand>
        <name>substrate</name>
    </ligand>
</feature>
<feature type="binding site" evidence="1">
    <location>
        <position position="16"/>
    </location>
    <ligand>
        <name>Zn(2+)</name>
        <dbReference type="ChEBI" id="CHEBI:29105"/>
        <label>1</label>
    </ligand>
</feature>
<feature type="binding site" evidence="1">
    <location>
        <position position="42"/>
    </location>
    <ligand>
        <name>substrate</name>
    </ligand>
</feature>
<feature type="binding site" description="via carbamate group" evidence="1">
    <location>
        <position position="100"/>
    </location>
    <ligand>
        <name>Zn(2+)</name>
        <dbReference type="ChEBI" id="CHEBI:29105"/>
        <label>1</label>
    </ligand>
</feature>
<feature type="binding site" description="via carbamate group" evidence="1">
    <location>
        <position position="100"/>
    </location>
    <ligand>
        <name>Zn(2+)</name>
        <dbReference type="ChEBI" id="CHEBI:29105"/>
        <label>2</label>
    </ligand>
</feature>
<feature type="binding site" evidence="1">
    <location>
        <position position="137"/>
    </location>
    <ligand>
        <name>substrate</name>
    </ligand>
</feature>
<feature type="binding site" evidence="1">
    <location>
        <position position="137"/>
    </location>
    <ligand>
        <name>Zn(2+)</name>
        <dbReference type="ChEBI" id="CHEBI:29105"/>
        <label>2</label>
    </ligand>
</feature>
<feature type="binding site" evidence="1">
    <location>
        <position position="175"/>
    </location>
    <ligand>
        <name>Zn(2+)</name>
        <dbReference type="ChEBI" id="CHEBI:29105"/>
        <label>2</label>
    </ligand>
</feature>
<feature type="binding site" evidence="1">
    <location>
        <position position="220"/>
    </location>
    <ligand>
        <name>substrate</name>
    </ligand>
</feature>
<feature type="binding site" evidence="1">
    <location>
        <position position="248"/>
    </location>
    <ligand>
        <name>Zn(2+)</name>
        <dbReference type="ChEBI" id="CHEBI:29105"/>
        <label>1</label>
    </ligand>
</feature>
<feature type="binding site" evidence="1">
    <location>
        <position position="252"/>
    </location>
    <ligand>
        <name>substrate</name>
    </ligand>
</feature>
<feature type="binding site" evidence="1">
    <location>
        <position position="264"/>
    </location>
    <ligand>
        <name>substrate</name>
    </ligand>
</feature>
<feature type="modified residue" description="N6-carboxylysine" evidence="1">
    <location>
        <position position="100"/>
    </location>
</feature>
<accession>B0KUE9</accession>
<reference key="1">
    <citation type="submission" date="2008-01" db="EMBL/GenBank/DDBJ databases">
        <title>Complete sequence of Pseudomonas putida GB-1.</title>
        <authorList>
            <consortium name="US DOE Joint Genome Institute"/>
            <person name="Copeland A."/>
            <person name="Lucas S."/>
            <person name="Lapidus A."/>
            <person name="Barry K."/>
            <person name="Glavina del Rio T."/>
            <person name="Dalin E."/>
            <person name="Tice H."/>
            <person name="Pitluck S."/>
            <person name="Bruce D."/>
            <person name="Goodwin L."/>
            <person name="Chertkov O."/>
            <person name="Brettin T."/>
            <person name="Detter J.C."/>
            <person name="Han C."/>
            <person name="Kuske C.R."/>
            <person name="Schmutz J."/>
            <person name="Larimer F."/>
            <person name="Land M."/>
            <person name="Hauser L."/>
            <person name="Kyrpides N."/>
            <person name="Kim E."/>
            <person name="McCarthy J.K."/>
            <person name="Richardson P."/>
        </authorList>
    </citation>
    <scope>NUCLEOTIDE SEQUENCE [LARGE SCALE GENOMIC DNA]</scope>
    <source>
        <strain>GB-1</strain>
    </source>
</reference>
<keyword id="KW-0378">Hydrolase</keyword>
<keyword id="KW-0479">Metal-binding</keyword>
<keyword id="KW-0665">Pyrimidine biosynthesis</keyword>
<keyword id="KW-0862">Zinc</keyword>
<organism>
    <name type="scientific">Pseudomonas putida (strain GB-1)</name>
    <dbReference type="NCBI Taxonomy" id="76869"/>
    <lineage>
        <taxon>Bacteria</taxon>
        <taxon>Pseudomonadati</taxon>
        <taxon>Pseudomonadota</taxon>
        <taxon>Gammaproteobacteria</taxon>
        <taxon>Pseudomonadales</taxon>
        <taxon>Pseudomonadaceae</taxon>
        <taxon>Pseudomonas</taxon>
    </lineage>
</organism>
<proteinExistence type="inferred from homology"/>
<protein>
    <recommendedName>
        <fullName evidence="1">Dihydroorotase</fullName>
        <shortName evidence="1">DHOase</shortName>
        <ecNumber evidence="1">3.5.2.3</ecNumber>
    </recommendedName>
</protein>
<name>PYRC_PSEPG</name>
<evidence type="ECO:0000255" key="1">
    <source>
        <dbReference type="HAMAP-Rule" id="MF_00219"/>
    </source>
</evidence>
<gene>
    <name evidence="1" type="primary">pyrC</name>
    <name type="ordered locus">PputGB1_4326</name>
</gene>
<sequence>MSDRLTLLRPDDWHIHLRDGAVLPHTVGDVARTFARAIIMPNLVPPVRNAAEAGAYRERILAARPAGSRFEPLMVLYLTDRTSPEDVRAAKASGIVYAAKLYPAGATTNSDSGVTSIDNIFPAIEALAEVGMPLLVHGEVTRSEIDVFDREKRFIDEHMRRVVERFPTLKVVFEHITTSDAAQFVTEAPANVGATITAQHLLYNRNHMLVGGIRPHFYCLPILKRNTHQVALLDAATSGNPKFFLGTDSAPHARHAKEAACGCAGCYTAYAAIEMYAEAFEQRNALDKLEGFASLHGPAFYGLPANTDTITLVREEWTAPDSLPFGEQTVVPLRAGEKLRWRLLEENA</sequence>
<dbReference type="EC" id="3.5.2.3" evidence="1"/>
<dbReference type="EMBL" id="CP000926">
    <property type="protein sequence ID" value="ABZ00215.1"/>
    <property type="molecule type" value="Genomic_DNA"/>
</dbReference>
<dbReference type="RefSeq" id="WP_012273882.1">
    <property type="nucleotide sequence ID" value="NC_010322.1"/>
</dbReference>
<dbReference type="SMR" id="B0KUE9"/>
<dbReference type="MEROPS" id="M38.A02"/>
<dbReference type="KEGG" id="ppg:PputGB1_4326"/>
<dbReference type="eggNOG" id="COG0418">
    <property type="taxonomic scope" value="Bacteria"/>
</dbReference>
<dbReference type="HOGENOM" id="CLU_041558_1_0_6"/>
<dbReference type="UniPathway" id="UPA00070">
    <property type="reaction ID" value="UER00117"/>
</dbReference>
<dbReference type="Proteomes" id="UP000002157">
    <property type="component" value="Chromosome"/>
</dbReference>
<dbReference type="GO" id="GO:0005829">
    <property type="term" value="C:cytosol"/>
    <property type="evidence" value="ECO:0007669"/>
    <property type="project" value="TreeGrafter"/>
</dbReference>
<dbReference type="GO" id="GO:0004151">
    <property type="term" value="F:dihydroorotase activity"/>
    <property type="evidence" value="ECO:0007669"/>
    <property type="project" value="UniProtKB-UniRule"/>
</dbReference>
<dbReference type="GO" id="GO:0008270">
    <property type="term" value="F:zinc ion binding"/>
    <property type="evidence" value="ECO:0007669"/>
    <property type="project" value="UniProtKB-UniRule"/>
</dbReference>
<dbReference type="GO" id="GO:0006207">
    <property type="term" value="P:'de novo' pyrimidine nucleobase biosynthetic process"/>
    <property type="evidence" value="ECO:0007669"/>
    <property type="project" value="TreeGrafter"/>
</dbReference>
<dbReference type="GO" id="GO:0044205">
    <property type="term" value="P:'de novo' UMP biosynthetic process"/>
    <property type="evidence" value="ECO:0007669"/>
    <property type="project" value="UniProtKB-UniRule"/>
</dbReference>
<dbReference type="CDD" id="cd01294">
    <property type="entry name" value="DHOase"/>
    <property type="match status" value="1"/>
</dbReference>
<dbReference type="FunFam" id="3.20.20.140:FF:000006">
    <property type="entry name" value="Dihydroorotase"/>
    <property type="match status" value="1"/>
</dbReference>
<dbReference type="Gene3D" id="3.20.20.140">
    <property type="entry name" value="Metal-dependent hydrolases"/>
    <property type="match status" value="1"/>
</dbReference>
<dbReference type="HAMAP" id="MF_00219">
    <property type="entry name" value="PyrC_classII"/>
    <property type="match status" value="1"/>
</dbReference>
<dbReference type="InterPro" id="IPR006680">
    <property type="entry name" value="Amidohydro-rel"/>
</dbReference>
<dbReference type="InterPro" id="IPR004721">
    <property type="entry name" value="DHOdimr"/>
</dbReference>
<dbReference type="InterPro" id="IPR002195">
    <property type="entry name" value="Dihydroorotase_CS"/>
</dbReference>
<dbReference type="InterPro" id="IPR032466">
    <property type="entry name" value="Metal_Hydrolase"/>
</dbReference>
<dbReference type="NCBIfam" id="TIGR00856">
    <property type="entry name" value="pyrC_dimer"/>
    <property type="match status" value="1"/>
</dbReference>
<dbReference type="PANTHER" id="PTHR43137">
    <property type="entry name" value="DIHYDROOROTASE"/>
    <property type="match status" value="1"/>
</dbReference>
<dbReference type="PANTHER" id="PTHR43137:SF1">
    <property type="entry name" value="DIHYDROOROTASE"/>
    <property type="match status" value="1"/>
</dbReference>
<dbReference type="Pfam" id="PF01979">
    <property type="entry name" value="Amidohydro_1"/>
    <property type="match status" value="1"/>
</dbReference>
<dbReference type="PIRSF" id="PIRSF001237">
    <property type="entry name" value="DHOdimr"/>
    <property type="match status" value="1"/>
</dbReference>
<dbReference type="SUPFAM" id="SSF51556">
    <property type="entry name" value="Metallo-dependent hydrolases"/>
    <property type="match status" value="1"/>
</dbReference>
<dbReference type="PROSITE" id="PS00482">
    <property type="entry name" value="DIHYDROOROTASE_1"/>
    <property type="match status" value="1"/>
</dbReference>
<dbReference type="PROSITE" id="PS00483">
    <property type="entry name" value="DIHYDROOROTASE_2"/>
    <property type="match status" value="1"/>
</dbReference>
<comment type="function">
    <text evidence="1">Catalyzes the reversible cyclization of carbamoyl aspartate to dihydroorotate.</text>
</comment>
<comment type="catalytic activity">
    <reaction evidence="1">
        <text>(S)-dihydroorotate + H2O = N-carbamoyl-L-aspartate + H(+)</text>
        <dbReference type="Rhea" id="RHEA:24296"/>
        <dbReference type="ChEBI" id="CHEBI:15377"/>
        <dbReference type="ChEBI" id="CHEBI:15378"/>
        <dbReference type="ChEBI" id="CHEBI:30864"/>
        <dbReference type="ChEBI" id="CHEBI:32814"/>
        <dbReference type="EC" id="3.5.2.3"/>
    </reaction>
</comment>
<comment type="cofactor">
    <cofactor evidence="1">
        <name>Zn(2+)</name>
        <dbReference type="ChEBI" id="CHEBI:29105"/>
    </cofactor>
    <text evidence="1">Binds 2 Zn(2+) ions per subunit.</text>
</comment>
<comment type="pathway">
    <text evidence="1">Pyrimidine metabolism; UMP biosynthesis via de novo pathway; (S)-dihydroorotate from bicarbonate: step 3/3.</text>
</comment>
<comment type="subunit">
    <text evidence="1">Homodimer.</text>
</comment>
<comment type="similarity">
    <text evidence="1">Belongs to the metallo-dependent hydrolases superfamily. DHOase family. Class II DHOase subfamily.</text>
</comment>